<evidence type="ECO:0000255" key="1"/>
<evidence type="ECO:0000255" key="2">
    <source>
        <dbReference type="PROSITE-ProRule" id="PRU00498"/>
    </source>
</evidence>
<evidence type="ECO:0000256" key="3">
    <source>
        <dbReference type="SAM" id="MobiDB-lite"/>
    </source>
</evidence>
<evidence type="ECO:0000269" key="4">
    <source>
    </source>
</evidence>
<evidence type="ECO:0000269" key="5">
    <source>
    </source>
</evidence>
<evidence type="ECO:0000269" key="6">
    <source>
    </source>
</evidence>
<evidence type="ECO:0000269" key="7">
    <source>
    </source>
</evidence>
<evidence type="ECO:0000269" key="8">
    <source>
    </source>
</evidence>
<evidence type="ECO:0000269" key="9">
    <source>
    </source>
</evidence>
<evidence type="ECO:0000303" key="10">
    <source>
    </source>
</evidence>
<evidence type="ECO:0000303" key="11">
    <source>
    </source>
</evidence>
<evidence type="ECO:0000305" key="12"/>
<evidence type="ECO:0000305" key="13">
    <source>
    </source>
</evidence>
<accession>I1RF56</accession>
<reference key="1">
    <citation type="journal article" date="2007" name="Science">
        <title>The Fusarium graminearum genome reveals a link between localized polymorphism and pathogen specialization.</title>
        <authorList>
            <person name="Cuomo C.A."/>
            <person name="Gueldener U."/>
            <person name="Xu J.-R."/>
            <person name="Trail F."/>
            <person name="Turgeon B.G."/>
            <person name="Di Pietro A."/>
            <person name="Walton J.D."/>
            <person name="Ma L.-J."/>
            <person name="Baker S.E."/>
            <person name="Rep M."/>
            <person name="Adam G."/>
            <person name="Antoniw J."/>
            <person name="Baldwin T."/>
            <person name="Calvo S.E."/>
            <person name="Chang Y.-L."/>
            <person name="DeCaprio D."/>
            <person name="Gale L.R."/>
            <person name="Gnerre S."/>
            <person name="Goswami R.S."/>
            <person name="Hammond-Kosack K."/>
            <person name="Harris L.J."/>
            <person name="Hilburn K."/>
            <person name="Kennell J.C."/>
            <person name="Kroken S."/>
            <person name="Magnuson J.K."/>
            <person name="Mannhaupt G."/>
            <person name="Mauceli E.W."/>
            <person name="Mewes H.-W."/>
            <person name="Mitterbauer R."/>
            <person name="Muehlbauer G."/>
            <person name="Muensterkoetter M."/>
            <person name="Nelson D."/>
            <person name="O'Donnell K."/>
            <person name="Ouellet T."/>
            <person name="Qi W."/>
            <person name="Quesneville H."/>
            <person name="Roncero M.I.G."/>
            <person name="Seong K.-Y."/>
            <person name="Tetko I.V."/>
            <person name="Urban M."/>
            <person name="Waalwijk C."/>
            <person name="Ward T.J."/>
            <person name="Yao J."/>
            <person name="Birren B.W."/>
            <person name="Kistler H.C."/>
        </authorList>
    </citation>
    <scope>NUCLEOTIDE SEQUENCE [LARGE SCALE GENOMIC DNA]</scope>
    <source>
        <strain>ATCC MYA-4620 / CBS 123657 / FGSC 9075 / NRRL 31084 / PH-1</strain>
    </source>
</reference>
<reference key="2">
    <citation type="journal article" date="2010" name="Nature">
        <title>Comparative genomics reveals mobile pathogenicity chromosomes in Fusarium.</title>
        <authorList>
            <person name="Ma L.-J."/>
            <person name="van der Does H.C."/>
            <person name="Borkovich K.A."/>
            <person name="Coleman J.J."/>
            <person name="Daboussi M.-J."/>
            <person name="Di Pietro A."/>
            <person name="Dufresne M."/>
            <person name="Freitag M."/>
            <person name="Grabherr M."/>
            <person name="Henrissat B."/>
            <person name="Houterman P.M."/>
            <person name="Kang S."/>
            <person name="Shim W.-B."/>
            <person name="Woloshuk C."/>
            <person name="Xie X."/>
            <person name="Xu J.-R."/>
            <person name="Antoniw J."/>
            <person name="Baker S.E."/>
            <person name="Bluhm B.H."/>
            <person name="Breakspear A."/>
            <person name="Brown D.W."/>
            <person name="Butchko R.A.E."/>
            <person name="Chapman S."/>
            <person name="Coulson R."/>
            <person name="Coutinho P.M."/>
            <person name="Danchin E.G.J."/>
            <person name="Diener A."/>
            <person name="Gale L.R."/>
            <person name="Gardiner D.M."/>
            <person name="Goff S."/>
            <person name="Hammond-Kosack K.E."/>
            <person name="Hilburn K."/>
            <person name="Hua-Van A."/>
            <person name="Jonkers W."/>
            <person name="Kazan K."/>
            <person name="Kodira C.D."/>
            <person name="Koehrsen M."/>
            <person name="Kumar L."/>
            <person name="Lee Y.-H."/>
            <person name="Li L."/>
            <person name="Manners J.M."/>
            <person name="Miranda-Saavedra D."/>
            <person name="Mukherjee M."/>
            <person name="Park G."/>
            <person name="Park J."/>
            <person name="Park S.-Y."/>
            <person name="Proctor R.H."/>
            <person name="Regev A."/>
            <person name="Ruiz-Roldan M.C."/>
            <person name="Sain D."/>
            <person name="Sakthikumar S."/>
            <person name="Sykes S."/>
            <person name="Schwartz D.C."/>
            <person name="Turgeon B.G."/>
            <person name="Wapinski I."/>
            <person name="Yoder O."/>
            <person name="Young S."/>
            <person name="Zeng Q."/>
            <person name="Zhou S."/>
            <person name="Galagan J."/>
            <person name="Cuomo C.A."/>
            <person name="Kistler H.C."/>
            <person name="Rep M."/>
        </authorList>
    </citation>
    <scope>GENOME REANNOTATION</scope>
    <source>
        <strain>ATCC MYA-4620 / CBS 123657 / FGSC 9075 / NRRL 31084 / PH-1</strain>
    </source>
</reference>
<reference key="3">
    <citation type="journal article" date="2015" name="BMC Genomics">
        <title>The completed genome sequence of the pathogenic ascomycete fungus Fusarium graminearum.</title>
        <authorList>
            <person name="King R."/>
            <person name="Urban M."/>
            <person name="Hammond-Kosack M.C.U."/>
            <person name="Hassani-Pak K."/>
            <person name="Hammond-Kosack K.E."/>
        </authorList>
    </citation>
    <scope>NUCLEOTIDE SEQUENCE [LARGE SCALE GENOMIC DNA]</scope>
    <source>
        <strain>ATCC MYA-4620 / CBS 123657 / FGSC 9075 / NRRL 31084 / PH-1</strain>
    </source>
</reference>
<reference key="4">
    <citation type="journal article" date="2005" name="Appl. Environ. Microbiol.">
        <title>Putative polyketide synthase and laccase genes for biosynthesis of aurofusarin in Gibberella zeae.</title>
        <authorList>
            <person name="Kim J.E."/>
            <person name="Han K.H."/>
            <person name="Jin J."/>
            <person name="Kim H."/>
            <person name="Kim J.C."/>
            <person name="Yun S.H."/>
            <person name="Lee Y.W."/>
        </authorList>
    </citation>
    <scope>FUNCTION</scope>
</reference>
<reference key="5">
    <citation type="journal article" date="2005" name="Fungal Genet. Biol.">
        <title>Identification of a gene cluster responsible for the biosynthesis of aurofusarin in the Fusarium graminearum species complex.</title>
        <authorList>
            <person name="Malz S."/>
            <person name="Grell M.N."/>
            <person name="Thrane C."/>
            <person name="Maier F.J."/>
            <person name="Rosager P."/>
            <person name="Felk A."/>
            <person name="Albertsen K.S."/>
            <person name="Salomon S."/>
            <person name="Bohn L."/>
            <person name="Schaefer W."/>
            <person name="Giese H."/>
        </authorList>
    </citation>
    <scope>FUNCTION</scope>
    <scope>PATHWAY</scope>
</reference>
<reference key="6">
    <citation type="journal article" date="2006" name="Mol. Microbiol.">
        <title>The biosynthetic pathway for aurofusarin in Fusarium graminearum reveals a close link between the naphthoquinones and naphthopyrones.</title>
        <authorList>
            <person name="Frandsen R.J."/>
            <person name="Nielsen N.J."/>
            <person name="Maolanon N."/>
            <person name="Soerensen J.C."/>
            <person name="Olsson S."/>
            <person name="Nielsen J."/>
            <person name="Giese H."/>
        </authorList>
    </citation>
    <scope>FUNCTION</scope>
    <scope>INDUCTION</scope>
    <scope>PATHWAY</scope>
</reference>
<reference key="7">
    <citation type="journal article" date="2006" name="Appl. Environ. Microbiol.">
        <title>GIP2, a putative transcription factor that regulates the aurofusarin biosynthetic gene cluster in Gibberella zeae.</title>
        <authorList>
            <person name="Kim J.E."/>
            <person name="Jin J."/>
            <person name="Kim H."/>
            <person name="Kim J.C."/>
            <person name="Yun S.H."/>
            <person name="Lee Y.W."/>
        </authorList>
    </citation>
    <scope>INDUCTION</scope>
</reference>
<reference key="8">
    <citation type="journal article" date="2011" name="J. Biol. Chem.">
        <title>Two novel classes of enzymes are required for the biosynthesis of aurofusarin in Fusarium graminearum.</title>
        <authorList>
            <person name="Frandsen R.J."/>
            <person name="Schuett C."/>
            <person name="Lund B.W."/>
            <person name="Staerk D."/>
            <person name="Nielsen J."/>
            <person name="Olsson S."/>
            <person name="Giese H."/>
        </authorList>
    </citation>
    <scope>FUNCTION</scope>
    <scope>DISRUPTION PHENOTYPE</scope>
    <scope>PATHWAY</scope>
</reference>
<reference key="9">
    <citation type="journal article" date="2013" name="Microb. Cell Fact.">
        <title>Reconstruction of the biosynthetic pathway for the core fungal polyketide scaffold rubrofusarin in Saccharomyces cerevisiae.</title>
        <authorList>
            <person name="Rugbjerg P."/>
            <person name="Naesby M."/>
            <person name="Mortensen U.H."/>
            <person name="Frandsen R.J."/>
        </authorList>
    </citation>
    <scope>FUNCTION</scope>
</reference>
<proteinExistence type="evidence at transcript level"/>
<feature type="chain" id="PRO_0000441089" description="Rubrofusarin-specific efflux pump aurT">
    <location>
        <begin position="1"/>
        <end position="544"/>
    </location>
</feature>
<feature type="transmembrane region" description="Helical" evidence="1">
    <location>
        <begin position="45"/>
        <end position="65"/>
    </location>
</feature>
<feature type="transmembrane region" description="Helical" evidence="1">
    <location>
        <begin position="89"/>
        <end position="111"/>
    </location>
</feature>
<feature type="transmembrane region" description="Helical" evidence="1">
    <location>
        <begin position="116"/>
        <end position="136"/>
    </location>
</feature>
<feature type="transmembrane region" description="Helical" evidence="1">
    <location>
        <begin position="146"/>
        <end position="166"/>
    </location>
</feature>
<feature type="transmembrane region" description="Helical" evidence="1">
    <location>
        <begin position="177"/>
        <end position="197"/>
    </location>
</feature>
<feature type="transmembrane region" description="Helical" evidence="1">
    <location>
        <begin position="205"/>
        <end position="225"/>
    </location>
</feature>
<feature type="transmembrane region" description="Helical" evidence="1">
    <location>
        <begin position="246"/>
        <end position="266"/>
    </location>
</feature>
<feature type="transmembrane region" description="Helical" evidence="1">
    <location>
        <begin position="276"/>
        <end position="296"/>
    </location>
</feature>
<feature type="transmembrane region" description="Helical" evidence="1">
    <location>
        <begin position="318"/>
        <end position="338"/>
    </location>
</feature>
<feature type="transmembrane region" description="Helical" evidence="1">
    <location>
        <begin position="357"/>
        <end position="377"/>
    </location>
</feature>
<feature type="transmembrane region" description="Helical" evidence="1">
    <location>
        <begin position="380"/>
        <end position="400"/>
    </location>
</feature>
<feature type="transmembrane region" description="Helical" evidence="1">
    <location>
        <begin position="407"/>
        <end position="427"/>
    </location>
</feature>
<feature type="transmembrane region" description="Helical" evidence="1">
    <location>
        <begin position="444"/>
        <end position="464"/>
    </location>
</feature>
<feature type="transmembrane region" description="Helical" evidence="1">
    <location>
        <begin position="514"/>
        <end position="534"/>
    </location>
</feature>
<feature type="region of interest" description="Disordered" evidence="3">
    <location>
        <begin position="1"/>
        <end position="42"/>
    </location>
</feature>
<feature type="compositionally biased region" description="Basic and acidic residues" evidence="3">
    <location>
        <begin position="1"/>
        <end position="12"/>
    </location>
</feature>
<feature type="compositionally biased region" description="Pro residues" evidence="3">
    <location>
        <begin position="17"/>
        <end position="27"/>
    </location>
</feature>
<feature type="compositionally biased region" description="Basic and acidic residues" evidence="3">
    <location>
        <begin position="30"/>
        <end position="42"/>
    </location>
</feature>
<feature type="glycosylation site" description="N-linked (GlcNAc...) asparagine" evidence="2">
    <location>
        <position position="300"/>
    </location>
</feature>
<organism>
    <name type="scientific">Gibberella zeae (strain ATCC MYA-4620 / CBS 123657 / FGSC 9075 / NRRL 31084 / PH-1)</name>
    <name type="common">Wheat head blight fungus</name>
    <name type="synonym">Fusarium graminearum</name>
    <dbReference type="NCBI Taxonomy" id="229533"/>
    <lineage>
        <taxon>Eukaryota</taxon>
        <taxon>Fungi</taxon>
        <taxon>Dikarya</taxon>
        <taxon>Ascomycota</taxon>
        <taxon>Pezizomycotina</taxon>
        <taxon>Sordariomycetes</taxon>
        <taxon>Hypocreomycetidae</taxon>
        <taxon>Hypocreales</taxon>
        <taxon>Nectriaceae</taxon>
        <taxon>Fusarium</taxon>
    </lineage>
</organism>
<dbReference type="EMBL" id="HG970332">
    <property type="protein sequence ID" value="CEF74599.1"/>
    <property type="molecule type" value="Genomic_DNA"/>
</dbReference>
<dbReference type="RefSeq" id="XP_011318231.1">
    <property type="nucleotide sequence ID" value="XM_011319929.1"/>
</dbReference>
<dbReference type="SMR" id="I1RF56"/>
<dbReference type="FunCoup" id="I1RF56">
    <property type="interactions" value="61"/>
</dbReference>
<dbReference type="STRING" id="229533.I1RF56"/>
<dbReference type="GlyCosmos" id="I1RF56">
    <property type="glycosylation" value="1 site, No reported glycans"/>
</dbReference>
<dbReference type="KEGG" id="fgr:FGSG_02322"/>
<dbReference type="VEuPathDB" id="FungiDB:FGRAMPH1_01G05589"/>
<dbReference type="eggNOG" id="KOG0254">
    <property type="taxonomic scope" value="Eukaryota"/>
</dbReference>
<dbReference type="HOGENOM" id="CLU_000960_22_1_1"/>
<dbReference type="InParanoid" id="I1RF56"/>
<dbReference type="OrthoDB" id="111966at110618"/>
<dbReference type="Proteomes" id="UP000070720">
    <property type="component" value="Chromosome 1"/>
</dbReference>
<dbReference type="GO" id="GO:0005886">
    <property type="term" value="C:plasma membrane"/>
    <property type="evidence" value="ECO:0007669"/>
    <property type="project" value="UniProtKB-SubCell"/>
</dbReference>
<dbReference type="GO" id="GO:0022857">
    <property type="term" value="F:transmembrane transporter activity"/>
    <property type="evidence" value="ECO:0007669"/>
    <property type="project" value="InterPro"/>
</dbReference>
<dbReference type="CDD" id="cd17502">
    <property type="entry name" value="MFS_Azr1_MDR_like"/>
    <property type="match status" value="1"/>
</dbReference>
<dbReference type="FunFam" id="1.20.1250.20:FF:000196">
    <property type="entry name" value="MFS toxin efflux pump (AflT)"/>
    <property type="match status" value="1"/>
</dbReference>
<dbReference type="FunFam" id="1.20.1720.10:FF:000012">
    <property type="entry name" value="MFS toxin efflux pump (AflT)"/>
    <property type="match status" value="1"/>
</dbReference>
<dbReference type="Gene3D" id="1.20.1250.20">
    <property type="entry name" value="MFS general substrate transporter like domains"/>
    <property type="match status" value="1"/>
</dbReference>
<dbReference type="InterPro" id="IPR011701">
    <property type="entry name" value="MFS"/>
</dbReference>
<dbReference type="InterPro" id="IPR020846">
    <property type="entry name" value="MFS_dom"/>
</dbReference>
<dbReference type="InterPro" id="IPR036259">
    <property type="entry name" value="MFS_trans_sf"/>
</dbReference>
<dbReference type="PANTHER" id="PTHR23501:SF198">
    <property type="entry name" value="AZOLE RESISTANCE PROTEIN 1-RELATED"/>
    <property type="match status" value="1"/>
</dbReference>
<dbReference type="PANTHER" id="PTHR23501">
    <property type="entry name" value="MAJOR FACILITATOR SUPERFAMILY"/>
    <property type="match status" value="1"/>
</dbReference>
<dbReference type="Pfam" id="PF07690">
    <property type="entry name" value="MFS_1"/>
    <property type="match status" value="1"/>
</dbReference>
<dbReference type="SUPFAM" id="SSF103473">
    <property type="entry name" value="MFS general substrate transporter"/>
    <property type="match status" value="1"/>
</dbReference>
<dbReference type="PROSITE" id="PS50850">
    <property type="entry name" value="MFS"/>
    <property type="match status" value="1"/>
</dbReference>
<name>AURT_GIBZE</name>
<gene>
    <name evidence="11" type="primary">aurT</name>
    <name evidence="10" type="synonym">GIP4</name>
    <name type="ORF">FG02322</name>
    <name type="ORF">FGRAMPH1_01T05589</name>
</gene>
<protein>
    <recommendedName>
        <fullName evidence="11">Rubrofusarin-specific efflux pump aurT</fullName>
    </recommendedName>
    <alternativeName>
        <fullName evidence="11">Aurofusarin biosynthesis cluster protein T</fullName>
    </alternativeName>
    <alternativeName>
        <fullName evidence="10">Gibberella pigment protein 4</fullName>
    </alternativeName>
</protein>
<sequence length="544" mass="58460">MTDNTDMEKLDRATTPTPIPNEAPPTSEPSESKPEEAEDESKYPHGLKLAAIILSNMVAMFLVALDRTIIATAIPRITDDFNALGDISWYASAYLITSSATQLLWGRIFTFYPTKTVYLVAIFFFELGSLLCGVAPNSVAFIIGRAIAGAGSAGIYSGSTILITTVTPLSKRAGYVGMMGAVFGIASVIAPLIGGAFTDHVTWRWCFYINLPVGGAAVACLILLFPKFPVNEPVSVKQQIKQLDPWGNLVFLPGVICLILALQWGGEKYAWDSGRIVALLVLACVLLLVFIGIQIWQQENATVPPRLFKIRNVWLGTIFAFCLGSVLIVFLIALPIWFQGIRGTDAITSGIDTLPLVLSLVFGAIVSGGVINGVGWFNPVFFSSVIFMSVGGGLITTFVVDTPTRTWIGYQIILGLGIGQGMQLASLGTQVAVKQSDVPTGVSLMFFAQSLGGSVLVCVAQAVFNNELRSRLTSFDGIDVARIIGTGATQLRHVIPADRLAEVLVEYNAALRSYFYVGLAAACFAVLPSLGIEWKNVKGQEFVH</sequence>
<comment type="function">
    <text evidence="4 5 7 8 9">Rubrofusarin-specific efflux pump; part of the gene cluster that mediates the biosynthesis of aurofusarin, a red mycelium pigment which is acting as a mycotoxin (PubMed:15809006, PubMed:15811992, PubMed:16879655). The first step is performed by the polyketide synthase which condenses one acetyl-CoA and 6 malonyl-CoA units to form the first intermediate, the cyclic heptaketide and yellow pigment YWA1 (PubMed:21296881, PubMed:23557488). The C2 hydroxyl group in the pyrone ring of YWA1 is probably formed during ring closure by an aldol-type cyclization reaction (PubMed:21296881). The dehydratase aurZ then acts as the first tailoring enzyme in the aurofusarin biosynthetic pathway by converting YWA1 to nor-rubrofusarin (PubMed:21296881, PubMed:23557488). Nor-rubrofusarin is then methylated to rubrofusarin by the O-methyltransferase aurJ (PubMed:21296881, PubMed:23557488). Rubrofusarin is then transported across the plasma membrane by the rubrofusarin-specific pump aurT for further enzymatic processing by the extracellular complex composed of GIP1, aurF, aurO and aurS to yield aurofusarin (PubMed:21296881).</text>
</comment>
<comment type="pathway">
    <text evidence="4 7 8">Pigment biosynthesis.</text>
</comment>
<comment type="subcellular location">
    <subcellularLocation>
        <location evidence="13">Cell membrane</location>
        <topology evidence="12">Multi-pass membrane protein</topology>
    </subcellularLocation>
</comment>
<comment type="induction">
    <text evidence="6 7">Expression is regulated by the aurofusarin biosynthesis cluster-specific transcription factor aurR1/GIP2 (PubMed:16461721, PubMed:16879655).</text>
</comment>
<comment type="disruption phenotype">
    <text evidence="8">Leads to pink mycelia in young cultures which turn red in older cultures, suggesting a delayed production of aurofusarin (PubMed:21296881).</text>
</comment>
<comment type="similarity">
    <text evidence="12">Belongs to the major facilitator superfamily. TCR/Tet family.</text>
</comment>
<keyword id="KW-1003">Cell membrane</keyword>
<keyword id="KW-0325">Glycoprotein</keyword>
<keyword id="KW-0472">Membrane</keyword>
<keyword id="KW-1185">Reference proteome</keyword>
<keyword id="KW-0812">Transmembrane</keyword>
<keyword id="KW-1133">Transmembrane helix</keyword>
<keyword id="KW-0813">Transport</keyword>